<gene>
    <name type="primary">U58</name>
</gene>
<accession>P52363</accession>
<name>UL87_HHV7J</name>
<reference key="1">
    <citation type="journal article" date="1996" name="J. Virol.">
        <title>Determination and analysis of the complete nucleotide sequence of human herpesvirus.</title>
        <authorList>
            <person name="Nicholas J."/>
        </authorList>
    </citation>
    <scope>NUCLEOTIDE SEQUENCE [LARGE SCALE GENOMIC DNA]</scope>
</reference>
<organismHost>
    <name type="scientific">Homo sapiens</name>
    <name type="common">Human</name>
    <dbReference type="NCBI Taxonomy" id="9606"/>
</organismHost>
<proteinExistence type="inferred from homology"/>
<comment type="similarity">
    <text evidence="1">Belongs to the herpesviridae UL87 family.</text>
</comment>
<sequence length="775" mass="89414">MIDSISEETLIVKSYTVNHCAKNVPVFINSYDLTAEVAKNEDVRLARQVQISLEKIDEVIESIFSASGPSVENVKDQAKFALCRLLLGPVSIPCYCEEWDVNFYLTKCSYNCEGPVLYIYKNASQCCESTYRFSIMTNYHSTHIFRGLLSLQEWNSHLSNILCTCSNVTGDKYTATIFPNNASIYLEYYPYFLCYLCKHLSIIDIEQCTNELIAFLGPKTSQRIIIHYKLLFGFRSKPMNFTVSLLEQVFTLEIQKLYYSVSKHNSTTADFFNVITAKFAEDKYFVLRTFKLSAQITPGIQSFCSLKFKLQTLYLNLKIMKNTKLSISNSFYHGKTLYTLDEKQLVWRNLLLIYYGYNLKDNVKQTQEESLLSMHYIRILERLSLKSFREINQQFSFEIPSYQEKTLQFIPGGNDFAEITSVTHGETTVNAFNTNRVMNVKAALSGEIHCVLHRIPKSMTHSFVMYKRTFKEPSLTVSTFISNDDFTTSSLNINIRGPYCDFLYALGVYRLHVNIQDFFLPAFVCNSNNSMDLHGLENQGIVRKRKKKVYWITNFPCMISNSEKVNVGWFKAGTGIIPKVSGTDLKNVLLKELISIGEIPNITFDMDLHALLTLLEKRNMHQVPFLIKQFFMFLRLGLLVGYGRKQERKVHHIMLFLIQKGFFDFSKNSVANSKIKHACALVGSRLANNVPKILSKQKKMKLDHLGRNANALTVLRFIVENGYYKRKTIFRKLLKYLATTSFNAHVQTESNRLLNLMHNDSKTNFSSLERLYTLR</sequence>
<keyword id="KW-1185">Reference proteome</keyword>
<organism>
    <name type="scientific">Human herpesvirus 7 (strain JI)</name>
    <name type="common">HHV-7</name>
    <name type="synonym">Human T lymphotropic virus</name>
    <dbReference type="NCBI Taxonomy" id="57278"/>
    <lineage>
        <taxon>Viruses</taxon>
        <taxon>Duplodnaviria</taxon>
        <taxon>Heunggongvirae</taxon>
        <taxon>Peploviricota</taxon>
        <taxon>Herviviricetes</taxon>
        <taxon>Herpesvirales</taxon>
        <taxon>Orthoherpesviridae</taxon>
        <taxon>Betaherpesvirinae</taxon>
        <taxon>Roseolovirus</taxon>
        <taxon>Roseolovirus humanbeta7</taxon>
        <taxon>Human betaherpesvirus 7</taxon>
    </lineage>
</organism>
<dbReference type="EMBL" id="U43400">
    <property type="protein sequence ID" value="AAC54721.1"/>
    <property type="molecule type" value="Genomic_DNA"/>
</dbReference>
<dbReference type="PIR" id="T41961">
    <property type="entry name" value="T41961"/>
</dbReference>
<dbReference type="Proteomes" id="UP000009246">
    <property type="component" value="Segment"/>
</dbReference>
<dbReference type="InterPro" id="IPR004285">
    <property type="entry name" value="Herpes_UL87_C"/>
</dbReference>
<dbReference type="InterPro" id="IPR007618">
    <property type="entry name" value="Herpes_UL87_N"/>
</dbReference>
<dbReference type="Pfam" id="PF04532">
    <property type="entry name" value="DUF587"/>
    <property type="match status" value="1"/>
</dbReference>
<dbReference type="Pfam" id="PF03043">
    <property type="entry name" value="Herpes_UL87"/>
    <property type="match status" value="1"/>
</dbReference>
<evidence type="ECO:0000305" key="1"/>
<feature type="chain" id="PRO_0000116228" description="Protein U58">
    <location>
        <begin position="1"/>
        <end position="775"/>
    </location>
</feature>
<protein>
    <recommendedName>
        <fullName>Protein U58</fullName>
    </recommendedName>
</protein>